<comment type="function">
    <text evidence="1">Catalyzes the formation of S-adenosylmethionine (AdoMet) from methionine and ATP. The overall synthetic reaction is composed of two sequential steps, AdoMet formation and the subsequent tripolyphosphate hydrolysis which occurs prior to release of AdoMet from the enzyme.</text>
</comment>
<comment type="catalytic activity">
    <reaction evidence="1">
        <text>L-methionine + ATP + H2O = S-adenosyl-L-methionine + phosphate + diphosphate</text>
        <dbReference type="Rhea" id="RHEA:21080"/>
        <dbReference type="ChEBI" id="CHEBI:15377"/>
        <dbReference type="ChEBI" id="CHEBI:30616"/>
        <dbReference type="ChEBI" id="CHEBI:33019"/>
        <dbReference type="ChEBI" id="CHEBI:43474"/>
        <dbReference type="ChEBI" id="CHEBI:57844"/>
        <dbReference type="ChEBI" id="CHEBI:59789"/>
        <dbReference type="EC" id="2.5.1.6"/>
    </reaction>
</comment>
<comment type="cofactor">
    <cofactor evidence="1">
        <name>Mg(2+)</name>
        <dbReference type="ChEBI" id="CHEBI:18420"/>
    </cofactor>
    <text evidence="1">Binds 2 divalent ions per subunit.</text>
</comment>
<comment type="cofactor">
    <cofactor evidence="1">
        <name>K(+)</name>
        <dbReference type="ChEBI" id="CHEBI:29103"/>
    </cofactor>
    <text evidence="1">Binds 1 potassium ion per subunit.</text>
</comment>
<comment type="pathway">
    <text evidence="1">Amino-acid biosynthesis; S-adenosyl-L-methionine biosynthesis; S-adenosyl-L-methionine from L-methionine: step 1/1.</text>
</comment>
<comment type="subunit">
    <text evidence="1">Homotetramer; dimer of dimers.</text>
</comment>
<comment type="subcellular location">
    <subcellularLocation>
        <location evidence="1">Cytoplasm</location>
    </subcellularLocation>
</comment>
<comment type="similarity">
    <text evidence="1">Belongs to the AdoMet synthase family.</text>
</comment>
<proteinExistence type="inferred from homology"/>
<accession>Q6D081</accession>
<sequence>MAKHLFTSESVSEGHPDKIADQISDAVLDAILEQDPKARVACETYVKTGMVLVGGEITTSAWVDIEEITRRTVRDIGYVNSEMGFDANSCAVLSAIGKQSPDINQGVDRRDPLEQGAGDQGLMFGYATNETDVLMPAPVTYAHRLVHRQSEVRKSGSLPWLRPDAKSQVTFLYDDGKIAGIDAVVLSTQHSEDVSQKDLHEAVMEEIIKPVLPAEWLSASTKYFINPTGRFVIGGPMGDCGLTGRKIIVDTYGGAARHGGGAFSGKDPSKVDRSAAYAARYVAKNIVAAGLADRCEIQVSYAIGVAEPTSIMIETFGTEKVSNEQLTLLVREFFDLRPYGLIQMLDLLHPIYQETAAYGHFGREHFPWEKTDKAAQLREAAGL</sequence>
<evidence type="ECO:0000255" key="1">
    <source>
        <dbReference type="HAMAP-Rule" id="MF_00086"/>
    </source>
</evidence>
<gene>
    <name evidence="1" type="primary">metK</name>
    <name type="ordered locus">ECA3920</name>
</gene>
<protein>
    <recommendedName>
        <fullName evidence="1">S-adenosylmethionine synthase</fullName>
        <shortName evidence="1">AdoMet synthase</shortName>
        <ecNumber evidence="1">2.5.1.6</ecNumber>
    </recommendedName>
    <alternativeName>
        <fullName evidence="1">MAT</fullName>
    </alternativeName>
    <alternativeName>
        <fullName evidence="1">Methionine adenosyltransferase</fullName>
    </alternativeName>
</protein>
<organism>
    <name type="scientific">Pectobacterium atrosepticum (strain SCRI 1043 / ATCC BAA-672)</name>
    <name type="common">Erwinia carotovora subsp. atroseptica</name>
    <dbReference type="NCBI Taxonomy" id="218491"/>
    <lineage>
        <taxon>Bacteria</taxon>
        <taxon>Pseudomonadati</taxon>
        <taxon>Pseudomonadota</taxon>
        <taxon>Gammaproteobacteria</taxon>
        <taxon>Enterobacterales</taxon>
        <taxon>Pectobacteriaceae</taxon>
        <taxon>Pectobacterium</taxon>
    </lineage>
</organism>
<dbReference type="EC" id="2.5.1.6" evidence="1"/>
<dbReference type="EMBL" id="BX950851">
    <property type="protein sequence ID" value="CAG76817.1"/>
    <property type="molecule type" value="Genomic_DNA"/>
</dbReference>
<dbReference type="RefSeq" id="WP_011095416.1">
    <property type="nucleotide sequence ID" value="NC_004547.2"/>
</dbReference>
<dbReference type="SMR" id="Q6D081"/>
<dbReference type="STRING" id="218491.ECA3920"/>
<dbReference type="KEGG" id="eca:ECA3920"/>
<dbReference type="PATRIC" id="fig|218491.5.peg.3984"/>
<dbReference type="eggNOG" id="COG0192">
    <property type="taxonomic scope" value="Bacteria"/>
</dbReference>
<dbReference type="HOGENOM" id="CLU_041802_1_1_6"/>
<dbReference type="OrthoDB" id="9801686at2"/>
<dbReference type="UniPathway" id="UPA00315">
    <property type="reaction ID" value="UER00080"/>
</dbReference>
<dbReference type="Proteomes" id="UP000007966">
    <property type="component" value="Chromosome"/>
</dbReference>
<dbReference type="GO" id="GO:0005737">
    <property type="term" value="C:cytoplasm"/>
    <property type="evidence" value="ECO:0007669"/>
    <property type="project" value="UniProtKB-SubCell"/>
</dbReference>
<dbReference type="GO" id="GO:0005524">
    <property type="term" value="F:ATP binding"/>
    <property type="evidence" value="ECO:0007669"/>
    <property type="project" value="UniProtKB-UniRule"/>
</dbReference>
<dbReference type="GO" id="GO:0000287">
    <property type="term" value="F:magnesium ion binding"/>
    <property type="evidence" value="ECO:0007669"/>
    <property type="project" value="UniProtKB-UniRule"/>
</dbReference>
<dbReference type="GO" id="GO:0004478">
    <property type="term" value="F:methionine adenosyltransferase activity"/>
    <property type="evidence" value="ECO:0007669"/>
    <property type="project" value="UniProtKB-UniRule"/>
</dbReference>
<dbReference type="GO" id="GO:0006730">
    <property type="term" value="P:one-carbon metabolic process"/>
    <property type="evidence" value="ECO:0007669"/>
    <property type="project" value="UniProtKB-KW"/>
</dbReference>
<dbReference type="GO" id="GO:0006556">
    <property type="term" value="P:S-adenosylmethionine biosynthetic process"/>
    <property type="evidence" value="ECO:0007669"/>
    <property type="project" value="UniProtKB-UniRule"/>
</dbReference>
<dbReference type="CDD" id="cd18079">
    <property type="entry name" value="S-AdoMet_synt"/>
    <property type="match status" value="1"/>
</dbReference>
<dbReference type="FunFam" id="3.30.300.10:FF:000001">
    <property type="entry name" value="S-adenosylmethionine synthase"/>
    <property type="match status" value="1"/>
</dbReference>
<dbReference type="FunFam" id="3.30.300.10:FF:000003">
    <property type="entry name" value="S-adenosylmethionine synthase"/>
    <property type="match status" value="1"/>
</dbReference>
<dbReference type="Gene3D" id="3.30.300.10">
    <property type="match status" value="3"/>
</dbReference>
<dbReference type="HAMAP" id="MF_00086">
    <property type="entry name" value="S_AdoMet_synth1"/>
    <property type="match status" value="1"/>
</dbReference>
<dbReference type="InterPro" id="IPR022631">
    <property type="entry name" value="ADOMET_SYNTHASE_CS"/>
</dbReference>
<dbReference type="InterPro" id="IPR022630">
    <property type="entry name" value="S-AdoMet_synt_C"/>
</dbReference>
<dbReference type="InterPro" id="IPR022629">
    <property type="entry name" value="S-AdoMet_synt_central"/>
</dbReference>
<dbReference type="InterPro" id="IPR022628">
    <property type="entry name" value="S-AdoMet_synt_N"/>
</dbReference>
<dbReference type="InterPro" id="IPR002133">
    <property type="entry name" value="S-AdoMet_synthetase"/>
</dbReference>
<dbReference type="InterPro" id="IPR022636">
    <property type="entry name" value="S-AdoMet_synthetase_sfam"/>
</dbReference>
<dbReference type="NCBIfam" id="TIGR01034">
    <property type="entry name" value="metK"/>
    <property type="match status" value="1"/>
</dbReference>
<dbReference type="PANTHER" id="PTHR11964">
    <property type="entry name" value="S-ADENOSYLMETHIONINE SYNTHETASE"/>
    <property type="match status" value="1"/>
</dbReference>
<dbReference type="Pfam" id="PF02773">
    <property type="entry name" value="S-AdoMet_synt_C"/>
    <property type="match status" value="1"/>
</dbReference>
<dbReference type="Pfam" id="PF02772">
    <property type="entry name" value="S-AdoMet_synt_M"/>
    <property type="match status" value="1"/>
</dbReference>
<dbReference type="Pfam" id="PF00438">
    <property type="entry name" value="S-AdoMet_synt_N"/>
    <property type="match status" value="1"/>
</dbReference>
<dbReference type="PIRSF" id="PIRSF000497">
    <property type="entry name" value="MAT"/>
    <property type="match status" value="1"/>
</dbReference>
<dbReference type="SUPFAM" id="SSF55973">
    <property type="entry name" value="S-adenosylmethionine synthetase"/>
    <property type="match status" value="3"/>
</dbReference>
<dbReference type="PROSITE" id="PS00376">
    <property type="entry name" value="ADOMET_SYNTHASE_1"/>
    <property type="match status" value="1"/>
</dbReference>
<dbReference type="PROSITE" id="PS00377">
    <property type="entry name" value="ADOMET_SYNTHASE_2"/>
    <property type="match status" value="1"/>
</dbReference>
<name>METK_PECAS</name>
<feature type="chain" id="PRO_0000174522" description="S-adenosylmethionine synthase">
    <location>
        <begin position="1"/>
        <end position="383"/>
    </location>
</feature>
<feature type="region of interest" description="Flexible loop" evidence="1">
    <location>
        <begin position="99"/>
        <end position="109"/>
    </location>
</feature>
<feature type="binding site" description="in other chain" evidence="1">
    <location>
        <position position="15"/>
    </location>
    <ligand>
        <name>ATP</name>
        <dbReference type="ChEBI" id="CHEBI:30616"/>
        <note>ligand shared between two neighboring subunits</note>
    </ligand>
</feature>
<feature type="binding site" evidence="1">
    <location>
        <position position="17"/>
    </location>
    <ligand>
        <name>Mg(2+)</name>
        <dbReference type="ChEBI" id="CHEBI:18420"/>
    </ligand>
</feature>
<feature type="binding site" evidence="1">
    <location>
        <position position="43"/>
    </location>
    <ligand>
        <name>K(+)</name>
        <dbReference type="ChEBI" id="CHEBI:29103"/>
    </ligand>
</feature>
<feature type="binding site" description="in other chain" evidence="1">
    <location>
        <position position="56"/>
    </location>
    <ligand>
        <name>L-methionine</name>
        <dbReference type="ChEBI" id="CHEBI:57844"/>
        <note>ligand shared between two neighboring subunits</note>
    </ligand>
</feature>
<feature type="binding site" description="in other chain" evidence="1">
    <location>
        <position position="99"/>
    </location>
    <ligand>
        <name>L-methionine</name>
        <dbReference type="ChEBI" id="CHEBI:57844"/>
        <note>ligand shared between two neighboring subunits</note>
    </ligand>
</feature>
<feature type="binding site" description="in other chain" evidence="1">
    <location>
        <begin position="164"/>
        <end position="166"/>
    </location>
    <ligand>
        <name>ATP</name>
        <dbReference type="ChEBI" id="CHEBI:30616"/>
        <note>ligand shared between two neighboring subunits</note>
    </ligand>
</feature>
<feature type="binding site" description="in other chain" evidence="1">
    <location>
        <begin position="230"/>
        <end position="231"/>
    </location>
    <ligand>
        <name>ATP</name>
        <dbReference type="ChEBI" id="CHEBI:30616"/>
        <note>ligand shared between two neighboring subunits</note>
    </ligand>
</feature>
<feature type="binding site" evidence="1">
    <location>
        <position position="239"/>
    </location>
    <ligand>
        <name>ATP</name>
        <dbReference type="ChEBI" id="CHEBI:30616"/>
        <note>ligand shared between two neighboring subunits</note>
    </ligand>
</feature>
<feature type="binding site" evidence="1">
    <location>
        <position position="239"/>
    </location>
    <ligand>
        <name>L-methionine</name>
        <dbReference type="ChEBI" id="CHEBI:57844"/>
        <note>ligand shared between two neighboring subunits</note>
    </ligand>
</feature>
<feature type="binding site" description="in other chain" evidence="1">
    <location>
        <begin position="245"/>
        <end position="246"/>
    </location>
    <ligand>
        <name>ATP</name>
        <dbReference type="ChEBI" id="CHEBI:30616"/>
        <note>ligand shared between two neighboring subunits</note>
    </ligand>
</feature>
<feature type="binding site" evidence="1">
    <location>
        <position position="262"/>
    </location>
    <ligand>
        <name>ATP</name>
        <dbReference type="ChEBI" id="CHEBI:30616"/>
        <note>ligand shared between two neighboring subunits</note>
    </ligand>
</feature>
<feature type="binding site" evidence="1">
    <location>
        <position position="266"/>
    </location>
    <ligand>
        <name>ATP</name>
        <dbReference type="ChEBI" id="CHEBI:30616"/>
        <note>ligand shared between two neighboring subunits</note>
    </ligand>
</feature>
<feature type="binding site" description="in other chain" evidence="1">
    <location>
        <position position="270"/>
    </location>
    <ligand>
        <name>L-methionine</name>
        <dbReference type="ChEBI" id="CHEBI:57844"/>
        <note>ligand shared between two neighboring subunits</note>
    </ligand>
</feature>
<reference key="1">
    <citation type="journal article" date="2004" name="Proc. Natl. Acad. Sci. U.S.A.">
        <title>Genome sequence of the enterobacterial phytopathogen Erwinia carotovora subsp. atroseptica and characterization of virulence factors.</title>
        <authorList>
            <person name="Bell K.S."/>
            <person name="Sebaihia M."/>
            <person name="Pritchard L."/>
            <person name="Holden M.T.G."/>
            <person name="Hyman L.J."/>
            <person name="Holeva M.C."/>
            <person name="Thomson N.R."/>
            <person name="Bentley S.D."/>
            <person name="Churcher L.J.C."/>
            <person name="Mungall K."/>
            <person name="Atkin R."/>
            <person name="Bason N."/>
            <person name="Brooks K."/>
            <person name="Chillingworth T."/>
            <person name="Clark K."/>
            <person name="Doggett J."/>
            <person name="Fraser A."/>
            <person name="Hance Z."/>
            <person name="Hauser H."/>
            <person name="Jagels K."/>
            <person name="Moule S."/>
            <person name="Norbertczak H."/>
            <person name="Ormond D."/>
            <person name="Price C."/>
            <person name="Quail M.A."/>
            <person name="Sanders M."/>
            <person name="Walker D."/>
            <person name="Whitehead S."/>
            <person name="Salmond G.P.C."/>
            <person name="Birch P.R.J."/>
            <person name="Parkhill J."/>
            <person name="Toth I.K."/>
        </authorList>
    </citation>
    <scope>NUCLEOTIDE SEQUENCE [LARGE SCALE GENOMIC DNA]</scope>
    <source>
        <strain>SCRI 1043 / ATCC BAA-672</strain>
    </source>
</reference>
<keyword id="KW-0067">ATP-binding</keyword>
<keyword id="KW-0963">Cytoplasm</keyword>
<keyword id="KW-0460">Magnesium</keyword>
<keyword id="KW-0479">Metal-binding</keyword>
<keyword id="KW-0547">Nucleotide-binding</keyword>
<keyword id="KW-0554">One-carbon metabolism</keyword>
<keyword id="KW-0630">Potassium</keyword>
<keyword id="KW-1185">Reference proteome</keyword>
<keyword id="KW-0808">Transferase</keyword>